<feature type="chain" id="PRO_0000182366" description="Transcriptional repressor NrdR">
    <location>
        <begin position="1"/>
        <end position="150"/>
    </location>
</feature>
<feature type="domain" description="ATP-cone" evidence="1">
    <location>
        <begin position="48"/>
        <end position="138"/>
    </location>
</feature>
<feature type="zinc finger region" evidence="1">
    <location>
        <begin position="3"/>
        <end position="33"/>
    </location>
</feature>
<gene>
    <name evidence="1" type="primary">nrdR</name>
    <name type="ordered locus">STH2761</name>
</gene>
<comment type="function">
    <text evidence="1">Negatively regulates transcription of bacterial ribonucleotide reductase nrd genes and operons by binding to NrdR-boxes.</text>
</comment>
<comment type="cofactor">
    <cofactor evidence="1">
        <name>Zn(2+)</name>
        <dbReference type="ChEBI" id="CHEBI:29105"/>
    </cofactor>
    <text evidence="1">Binds 1 zinc ion.</text>
</comment>
<comment type="similarity">
    <text evidence="1">Belongs to the NrdR family.</text>
</comment>
<accession>Q67KQ1</accession>
<proteinExistence type="inferred from homology"/>
<sequence>MKCPFCGGESRVLESRPASDEEAVRRRRECLACGRRFTTMERVEVPPLIVVKKDGRREPFNRDKLLTGVLKACEKRPVPMEVIEKLADDIERDLRSSLDREVPSVVIGERVMEALRQVDGVAYVRFASVYREFKDLNEFREQLEQLLKSR</sequence>
<dbReference type="EMBL" id="AP006840">
    <property type="protein sequence ID" value="BAD41746.1"/>
    <property type="molecule type" value="Genomic_DNA"/>
</dbReference>
<dbReference type="RefSeq" id="WP_011196880.1">
    <property type="nucleotide sequence ID" value="NC_006177.1"/>
</dbReference>
<dbReference type="SMR" id="Q67KQ1"/>
<dbReference type="STRING" id="292459.STH2761"/>
<dbReference type="KEGG" id="sth:STH2761"/>
<dbReference type="eggNOG" id="COG1327">
    <property type="taxonomic scope" value="Bacteria"/>
</dbReference>
<dbReference type="HOGENOM" id="CLU_108412_0_0_9"/>
<dbReference type="OrthoDB" id="9807461at2"/>
<dbReference type="Proteomes" id="UP000000417">
    <property type="component" value="Chromosome"/>
</dbReference>
<dbReference type="GO" id="GO:0005524">
    <property type="term" value="F:ATP binding"/>
    <property type="evidence" value="ECO:0007669"/>
    <property type="project" value="UniProtKB-KW"/>
</dbReference>
<dbReference type="GO" id="GO:0003677">
    <property type="term" value="F:DNA binding"/>
    <property type="evidence" value="ECO:0007669"/>
    <property type="project" value="UniProtKB-KW"/>
</dbReference>
<dbReference type="GO" id="GO:0008270">
    <property type="term" value="F:zinc ion binding"/>
    <property type="evidence" value="ECO:0007669"/>
    <property type="project" value="UniProtKB-KW"/>
</dbReference>
<dbReference type="GO" id="GO:0045892">
    <property type="term" value="P:negative regulation of DNA-templated transcription"/>
    <property type="evidence" value="ECO:0007669"/>
    <property type="project" value="UniProtKB-UniRule"/>
</dbReference>
<dbReference type="HAMAP" id="MF_00440">
    <property type="entry name" value="NrdR"/>
    <property type="match status" value="1"/>
</dbReference>
<dbReference type="InterPro" id="IPR005144">
    <property type="entry name" value="ATP-cone_dom"/>
</dbReference>
<dbReference type="InterPro" id="IPR055173">
    <property type="entry name" value="NrdR-like_N"/>
</dbReference>
<dbReference type="InterPro" id="IPR003796">
    <property type="entry name" value="RNR_NrdR-like"/>
</dbReference>
<dbReference type="NCBIfam" id="TIGR00244">
    <property type="entry name" value="transcriptional regulator NrdR"/>
    <property type="match status" value="1"/>
</dbReference>
<dbReference type="PANTHER" id="PTHR30455">
    <property type="entry name" value="TRANSCRIPTIONAL REPRESSOR NRDR"/>
    <property type="match status" value="1"/>
</dbReference>
<dbReference type="PANTHER" id="PTHR30455:SF2">
    <property type="entry name" value="TRANSCRIPTIONAL REPRESSOR NRDR"/>
    <property type="match status" value="1"/>
</dbReference>
<dbReference type="Pfam" id="PF03477">
    <property type="entry name" value="ATP-cone"/>
    <property type="match status" value="1"/>
</dbReference>
<dbReference type="Pfam" id="PF22811">
    <property type="entry name" value="Zn_ribbon_NrdR"/>
    <property type="match status" value="1"/>
</dbReference>
<dbReference type="PROSITE" id="PS51161">
    <property type="entry name" value="ATP_CONE"/>
    <property type="match status" value="1"/>
</dbReference>
<name>NRDR_SYMTH</name>
<protein>
    <recommendedName>
        <fullName evidence="1">Transcriptional repressor NrdR</fullName>
    </recommendedName>
</protein>
<organism>
    <name type="scientific">Symbiobacterium thermophilum (strain DSM 24528 / JCM 14929 / IAM 14863 / T)</name>
    <dbReference type="NCBI Taxonomy" id="292459"/>
    <lineage>
        <taxon>Bacteria</taxon>
        <taxon>Bacillati</taxon>
        <taxon>Bacillota</taxon>
        <taxon>Clostridia</taxon>
        <taxon>Eubacteriales</taxon>
        <taxon>Symbiobacteriaceae</taxon>
        <taxon>Symbiobacterium</taxon>
    </lineage>
</organism>
<evidence type="ECO:0000255" key="1">
    <source>
        <dbReference type="HAMAP-Rule" id="MF_00440"/>
    </source>
</evidence>
<keyword id="KW-0067">ATP-binding</keyword>
<keyword id="KW-0238">DNA-binding</keyword>
<keyword id="KW-0479">Metal-binding</keyword>
<keyword id="KW-0547">Nucleotide-binding</keyword>
<keyword id="KW-1185">Reference proteome</keyword>
<keyword id="KW-0678">Repressor</keyword>
<keyword id="KW-0804">Transcription</keyword>
<keyword id="KW-0805">Transcription regulation</keyword>
<keyword id="KW-0862">Zinc</keyword>
<keyword id="KW-0863">Zinc-finger</keyword>
<reference key="1">
    <citation type="journal article" date="2004" name="Nucleic Acids Res.">
        <title>Genome sequence of Symbiobacterium thermophilum, an uncultivable bacterium that depends on microbial commensalism.</title>
        <authorList>
            <person name="Ueda K."/>
            <person name="Yamashita A."/>
            <person name="Ishikawa J."/>
            <person name="Shimada M."/>
            <person name="Watsuji T."/>
            <person name="Morimura K."/>
            <person name="Ikeda H."/>
            <person name="Hattori M."/>
            <person name="Beppu T."/>
        </authorList>
    </citation>
    <scope>NUCLEOTIDE SEQUENCE [LARGE SCALE GENOMIC DNA]</scope>
    <source>
        <strain>DSM 24528 / JCM 14929 / IAM 14863 / T</strain>
    </source>
</reference>